<feature type="chain" id="PRO_0000235402" description="Holliday junction branch migration complex subunit RuvB">
    <location>
        <begin position="1"/>
        <end position="336"/>
    </location>
</feature>
<feature type="region of interest" description="Large ATPase domain (RuvB-L)" evidence="1">
    <location>
        <begin position="4"/>
        <end position="184"/>
    </location>
</feature>
<feature type="region of interest" description="Small ATPAse domain (RuvB-S)" evidence="1">
    <location>
        <begin position="185"/>
        <end position="255"/>
    </location>
</feature>
<feature type="region of interest" description="Head domain (RuvB-H)" evidence="1">
    <location>
        <begin position="258"/>
        <end position="336"/>
    </location>
</feature>
<feature type="binding site" evidence="1">
    <location>
        <position position="23"/>
    </location>
    <ligand>
        <name>ATP</name>
        <dbReference type="ChEBI" id="CHEBI:30616"/>
    </ligand>
</feature>
<feature type="binding site" evidence="1">
    <location>
        <position position="24"/>
    </location>
    <ligand>
        <name>ATP</name>
        <dbReference type="ChEBI" id="CHEBI:30616"/>
    </ligand>
</feature>
<feature type="binding site" evidence="1">
    <location>
        <position position="65"/>
    </location>
    <ligand>
        <name>ATP</name>
        <dbReference type="ChEBI" id="CHEBI:30616"/>
    </ligand>
</feature>
<feature type="binding site" evidence="1">
    <location>
        <position position="68"/>
    </location>
    <ligand>
        <name>ATP</name>
        <dbReference type="ChEBI" id="CHEBI:30616"/>
    </ligand>
</feature>
<feature type="binding site" evidence="1">
    <location>
        <position position="69"/>
    </location>
    <ligand>
        <name>ATP</name>
        <dbReference type="ChEBI" id="CHEBI:30616"/>
    </ligand>
</feature>
<feature type="binding site" evidence="1">
    <location>
        <position position="69"/>
    </location>
    <ligand>
        <name>Mg(2+)</name>
        <dbReference type="ChEBI" id="CHEBI:18420"/>
    </ligand>
</feature>
<feature type="binding site" evidence="1">
    <location>
        <position position="70"/>
    </location>
    <ligand>
        <name>ATP</name>
        <dbReference type="ChEBI" id="CHEBI:30616"/>
    </ligand>
</feature>
<feature type="binding site" evidence="1">
    <location>
        <begin position="131"/>
        <end position="133"/>
    </location>
    <ligand>
        <name>ATP</name>
        <dbReference type="ChEBI" id="CHEBI:30616"/>
    </ligand>
</feature>
<feature type="binding site" evidence="1">
    <location>
        <position position="174"/>
    </location>
    <ligand>
        <name>ATP</name>
        <dbReference type="ChEBI" id="CHEBI:30616"/>
    </ligand>
</feature>
<feature type="binding site" evidence="1">
    <location>
        <position position="184"/>
    </location>
    <ligand>
        <name>ATP</name>
        <dbReference type="ChEBI" id="CHEBI:30616"/>
    </ligand>
</feature>
<feature type="binding site" evidence="1">
    <location>
        <position position="221"/>
    </location>
    <ligand>
        <name>ATP</name>
        <dbReference type="ChEBI" id="CHEBI:30616"/>
    </ligand>
</feature>
<feature type="binding site" evidence="1">
    <location>
        <position position="294"/>
    </location>
    <ligand>
        <name>DNA</name>
        <dbReference type="ChEBI" id="CHEBI:16991"/>
    </ligand>
</feature>
<feature type="binding site" evidence="1">
    <location>
        <position position="313"/>
    </location>
    <ligand>
        <name>DNA</name>
        <dbReference type="ChEBI" id="CHEBI:16991"/>
    </ligand>
</feature>
<feature type="binding site" evidence="1">
    <location>
        <position position="318"/>
    </location>
    <ligand>
        <name>DNA</name>
        <dbReference type="ChEBI" id="CHEBI:16991"/>
    </ligand>
</feature>
<dbReference type="EC" id="3.6.4.-" evidence="1"/>
<dbReference type="EMBL" id="CP000026">
    <property type="protein sequence ID" value="AAV76950.1"/>
    <property type="molecule type" value="Genomic_DNA"/>
</dbReference>
<dbReference type="RefSeq" id="WP_000568508.1">
    <property type="nucleotide sequence ID" value="NC_006511.1"/>
</dbReference>
<dbReference type="SMR" id="Q5PIA7"/>
<dbReference type="KEGG" id="spt:SPA0975"/>
<dbReference type="HOGENOM" id="CLU_055599_1_0_6"/>
<dbReference type="Proteomes" id="UP000008185">
    <property type="component" value="Chromosome"/>
</dbReference>
<dbReference type="GO" id="GO:0005737">
    <property type="term" value="C:cytoplasm"/>
    <property type="evidence" value="ECO:0007669"/>
    <property type="project" value="UniProtKB-SubCell"/>
</dbReference>
<dbReference type="GO" id="GO:0048476">
    <property type="term" value="C:Holliday junction resolvase complex"/>
    <property type="evidence" value="ECO:0007669"/>
    <property type="project" value="UniProtKB-UniRule"/>
</dbReference>
<dbReference type="GO" id="GO:0005524">
    <property type="term" value="F:ATP binding"/>
    <property type="evidence" value="ECO:0007669"/>
    <property type="project" value="UniProtKB-UniRule"/>
</dbReference>
<dbReference type="GO" id="GO:0016887">
    <property type="term" value="F:ATP hydrolysis activity"/>
    <property type="evidence" value="ECO:0007669"/>
    <property type="project" value="InterPro"/>
</dbReference>
<dbReference type="GO" id="GO:0000400">
    <property type="term" value="F:four-way junction DNA binding"/>
    <property type="evidence" value="ECO:0007669"/>
    <property type="project" value="UniProtKB-UniRule"/>
</dbReference>
<dbReference type="GO" id="GO:0009378">
    <property type="term" value="F:four-way junction helicase activity"/>
    <property type="evidence" value="ECO:0007669"/>
    <property type="project" value="InterPro"/>
</dbReference>
<dbReference type="GO" id="GO:0006310">
    <property type="term" value="P:DNA recombination"/>
    <property type="evidence" value="ECO:0007669"/>
    <property type="project" value="UniProtKB-UniRule"/>
</dbReference>
<dbReference type="GO" id="GO:0006281">
    <property type="term" value="P:DNA repair"/>
    <property type="evidence" value="ECO:0007669"/>
    <property type="project" value="UniProtKB-UniRule"/>
</dbReference>
<dbReference type="CDD" id="cd00009">
    <property type="entry name" value="AAA"/>
    <property type="match status" value="1"/>
</dbReference>
<dbReference type="FunFam" id="1.10.10.10:FF:000086">
    <property type="entry name" value="Holliday junction ATP-dependent DNA helicase RuvB"/>
    <property type="match status" value="1"/>
</dbReference>
<dbReference type="FunFam" id="1.10.8.60:FF:000023">
    <property type="entry name" value="Holliday junction ATP-dependent DNA helicase RuvB"/>
    <property type="match status" value="1"/>
</dbReference>
<dbReference type="FunFam" id="3.40.50.300:FF:000073">
    <property type="entry name" value="Holliday junction ATP-dependent DNA helicase RuvB"/>
    <property type="match status" value="1"/>
</dbReference>
<dbReference type="Gene3D" id="1.10.8.60">
    <property type="match status" value="1"/>
</dbReference>
<dbReference type="Gene3D" id="3.40.50.300">
    <property type="entry name" value="P-loop containing nucleotide triphosphate hydrolases"/>
    <property type="match status" value="1"/>
</dbReference>
<dbReference type="Gene3D" id="1.10.10.10">
    <property type="entry name" value="Winged helix-like DNA-binding domain superfamily/Winged helix DNA-binding domain"/>
    <property type="match status" value="1"/>
</dbReference>
<dbReference type="HAMAP" id="MF_00016">
    <property type="entry name" value="DNA_HJ_migration_RuvB"/>
    <property type="match status" value="1"/>
</dbReference>
<dbReference type="InterPro" id="IPR003593">
    <property type="entry name" value="AAA+_ATPase"/>
</dbReference>
<dbReference type="InterPro" id="IPR041445">
    <property type="entry name" value="AAA_lid_4"/>
</dbReference>
<dbReference type="InterPro" id="IPR004605">
    <property type="entry name" value="DNA_helicase_Holl-junc_RuvB"/>
</dbReference>
<dbReference type="InterPro" id="IPR027417">
    <property type="entry name" value="P-loop_NTPase"/>
</dbReference>
<dbReference type="InterPro" id="IPR008824">
    <property type="entry name" value="RuvB-like_N"/>
</dbReference>
<dbReference type="InterPro" id="IPR008823">
    <property type="entry name" value="RuvB_C"/>
</dbReference>
<dbReference type="InterPro" id="IPR036388">
    <property type="entry name" value="WH-like_DNA-bd_sf"/>
</dbReference>
<dbReference type="InterPro" id="IPR036390">
    <property type="entry name" value="WH_DNA-bd_sf"/>
</dbReference>
<dbReference type="NCBIfam" id="NF000868">
    <property type="entry name" value="PRK00080.1"/>
    <property type="match status" value="1"/>
</dbReference>
<dbReference type="NCBIfam" id="TIGR00635">
    <property type="entry name" value="ruvB"/>
    <property type="match status" value="1"/>
</dbReference>
<dbReference type="PANTHER" id="PTHR42848">
    <property type="match status" value="1"/>
</dbReference>
<dbReference type="PANTHER" id="PTHR42848:SF1">
    <property type="entry name" value="HOLLIDAY JUNCTION BRANCH MIGRATION COMPLEX SUBUNIT RUVB"/>
    <property type="match status" value="1"/>
</dbReference>
<dbReference type="Pfam" id="PF17864">
    <property type="entry name" value="AAA_lid_4"/>
    <property type="match status" value="1"/>
</dbReference>
<dbReference type="Pfam" id="PF05491">
    <property type="entry name" value="RuvB_C"/>
    <property type="match status" value="1"/>
</dbReference>
<dbReference type="Pfam" id="PF05496">
    <property type="entry name" value="RuvB_N"/>
    <property type="match status" value="1"/>
</dbReference>
<dbReference type="SMART" id="SM00382">
    <property type="entry name" value="AAA"/>
    <property type="match status" value="1"/>
</dbReference>
<dbReference type="SUPFAM" id="SSF52540">
    <property type="entry name" value="P-loop containing nucleoside triphosphate hydrolases"/>
    <property type="match status" value="1"/>
</dbReference>
<dbReference type="SUPFAM" id="SSF46785">
    <property type="entry name" value="Winged helix' DNA-binding domain"/>
    <property type="match status" value="1"/>
</dbReference>
<comment type="function">
    <text evidence="1">The RuvA-RuvB-RuvC complex processes Holliday junction (HJ) DNA during genetic recombination and DNA repair, while the RuvA-RuvB complex plays an important role in the rescue of blocked DNA replication forks via replication fork reversal (RFR). RuvA specifically binds to HJ cruciform DNA, conferring on it an open structure. The RuvB hexamer acts as an ATP-dependent pump, pulling dsDNA into and through the RuvAB complex. RuvB forms 2 homohexamers on either side of HJ DNA bound by 1 or 2 RuvA tetramers; 4 subunits per hexamer contact DNA at a time. Coordinated motions by a converter formed by DNA-disengaged RuvB subunits stimulates ATP hydrolysis and nucleotide exchange. Immobilization of the converter enables RuvB to convert the ATP-contained energy into a lever motion, pulling 2 nucleotides of DNA out of the RuvA tetramer per ATP hydrolyzed, thus driving DNA branch migration. The RuvB motors rotate together with the DNA substrate, which together with the progressing nucleotide cycle form the mechanistic basis for DNA recombination by continuous HJ branch migration. Branch migration allows RuvC to scan DNA until it finds its consensus sequence, where it cleaves and resolves cruciform DNA.</text>
</comment>
<comment type="catalytic activity">
    <reaction evidence="1">
        <text>ATP + H2O = ADP + phosphate + H(+)</text>
        <dbReference type="Rhea" id="RHEA:13065"/>
        <dbReference type="ChEBI" id="CHEBI:15377"/>
        <dbReference type="ChEBI" id="CHEBI:15378"/>
        <dbReference type="ChEBI" id="CHEBI:30616"/>
        <dbReference type="ChEBI" id="CHEBI:43474"/>
        <dbReference type="ChEBI" id="CHEBI:456216"/>
    </reaction>
</comment>
<comment type="subunit">
    <text evidence="1">Homohexamer. Forms an RuvA(8)-RuvB(12)-Holliday junction (HJ) complex. HJ DNA is sandwiched between 2 RuvA tetramers; dsDNA enters through RuvA and exits via RuvB. An RuvB hexamer assembles on each DNA strand where it exits the tetramer. Each RuvB hexamer is contacted by two RuvA subunits (via domain III) on 2 adjacent RuvB subunits; this complex drives branch migration. In the full resolvosome a probable DNA-RuvA(4)-RuvB(12)-RuvC(2) complex forms which resolves the HJ.</text>
</comment>
<comment type="subcellular location">
    <subcellularLocation>
        <location evidence="1">Cytoplasm</location>
    </subcellularLocation>
</comment>
<comment type="domain">
    <text evidence="1">Has 3 domains, the large (RuvB-L) and small ATPase (RuvB-S) domains and the C-terminal head (RuvB-H) domain. The head domain binds DNA, while the ATPase domains jointly bind ATP, ADP or are empty depending on the state of the subunit in the translocation cycle. During a single DNA translocation step the structure of each domain remains the same, but their relative positions change.</text>
</comment>
<comment type="similarity">
    <text evidence="1">Belongs to the RuvB family.</text>
</comment>
<keyword id="KW-0067">ATP-binding</keyword>
<keyword id="KW-0963">Cytoplasm</keyword>
<keyword id="KW-0227">DNA damage</keyword>
<keyword id="KW-0233">DNA recombination</keyword>
<keyword id="KW-0234">DNA repair</keyword>
<keyword id="KW-0238">DNA-binding</keyword>
<keyword id="KW-0378">Hydrolase</keyword>
<keyword id="KW-0547">Nucleotide-binding</keyword>
<protein>
    <recommendedName>
        <fullName evidence="1">Holliday junction branch migration complex subunit RuvB</fullName>
        <ecNumber evidence="1">3.6.4.-</ecNumber>
    </recommendedName>
</protein>
<accession>Q5PIA7</accession>
<gene>
    <name evidence="1" type="primary">ruvB</name>
    <name type="ordered locus">SPA0975</name>
</gene>
<proteinExistence type="inferred from homology"/>
<evidence type="ECO:0000255" key="1">
    <source>
        <dbReference type="HAMAP-Rule" id="MF_00016"/>
    </source>
</evidence>
<name>RUVB_SALPA</name>
<organism>
    <name type="scientific">Salmonella paratyphi A (strain ATCC 9150 / SARB42)</name>
    <dbReference type="NCBI Taxonomy" id="295319"/>
    <lineage>
        <taxon>Bacteria</taxon>
        <taxon>Pseudomonadati</taxon>
        <taxon>Pseudomonadota</taxon>
        <taxon>Gammaproteobacteria</taxon>
        <taxon>Enterobacterales</taxon>
        <taxon>Enterobacteriaceae</taxon>
        <taxon>Salmonella</taxon>
    </lineage>
</organism>
<reference key="1">
    <citation type="journal article" date="2004" name="Nat. Genet.">
        <title>Comparison of genome degradation in Paratyphi A and Typhi, human-restricted serovars of Salmonella enterica that cause typhoid.</title>
        <authorList>
            <person name="McClelland M."/>
            <person name="Sanderson K.E."/>
            <person name="Clifton S.W."/>
            <person name="Latreille P."/>
            <person name="Porwollik S."/>
            <person name="Sabo A."/>
            <person name="Meyer R."/>
            <person name="Bieri T."/>
            <person name="Ozersky P."/>
            <person name="McLellan M."/>
            <person name="Harkins C.R."/>
            <person name="Wang C."/>
            <person name="Nguyen C."/>
            <person name="Berghoff A."/>
            <person name="Elliott G."/>
            <person name="Kohlberg S."/>
            <person name="Strong C."/>
            <person name="Du F."/>
            <person name="Carter J."/>
            <person name="Kremizki C."/>
            <person name="Layman D."/>
            <person name="Leonard S."/>
            <person name="Sun H."/>
            <person name="Fulton L."/>
            <person name="Nash W."/>
            <person name="Miner T."/>
            <person name="Minx P."/>
            <person name="Delehaunty K."/>
            <person name="Fronick C."/>
            <person name="Magrini V."/>
            <person name="Nhan M."/>
            <person name="Warren W."/>
            <person name="Florea L."/>
            <person name="Spieth J."/>
            <person name="Wilson R.K."/>
        </authorList>
    </citation>
    <scope>NUCLEOTIDE SEQUENCE [LARGE SCALE GENOMIC DNA]</scope>
    <source>
        <strain>ATCC 9150 / SARB42</strain>
    </source>
</reference>
<sequence length="336" mass="37019">MIEADRLISAGATIAEDVADRAIRPKLLAEYVGQPQVRSQMEIFIQAAKRRGDALDHLLIFGPPGLGKTTLANIVANEMGVNLRTTSGPVLEKAGDLAAMLTNLEPHDVLFIDEIHRLSPVVEEVLYPAMEDYQLDIMIGEGPAARSIKIDLPPFTLIGATTRAGSLTSPLRDRFGIVQRLEFYQVPDLQHIVGRSARHMGLEMSDDGALEVARRARGTPRIANRLLRRVRDFAEVKHDGAISAEIAAQALDMLNVDAEGFDYMDRKLLLAVIDKFFGGPVGLDNLAAAIGEERETIEDVLEPYLIQQGFLQRTPRGRMATVRAWNHFGITPPEMP</sequence>